<feature type="chain" id="PRO_0000375508" description="Succinyl-diaminopimelate desuccinylase">
    <location>
        <begin position="1"/>
        <end position="379"/>
    </location>
</feature>
<feature type="active site" evidence="1">
    <location>
        <position position="72"/>
    </location>
</feature>
<feature type="active site" description="Proton acceptor" evidence="1">
    <location>
        <position position="137"/>
    </location>
</feature>
<feature type="binding site" evidence="1">
    <location>
        <position position="70"/>
    </location>
    <ligand>
        <name>Zn(2+)</name>
        <dbReference type="ChEBI" id="CHEBI:29105"/>
        <label>1</label>
    </ligand>
</feature>
<feature type="binding site" evidence="1">
    <location>
        <position position="103"/>
    </location>
    <ligand>
        <name>Zn(2+)</name>
        <dbReference type="ChEBI" id="CHEBI:29105"/>
        <label>1</label>
    </ligand>
</feature>
<feature type="binding site" evidence="1">
    <location>
        <position position="103"/>
    </location>
    <ligand>
        <name>Zn(2+)</name>
        <dbReference type="ChEBI" id="CHEBI:29105"/>
        <label>2</label>
    </ligand>
</feature>
<feature type="binding site" evidence="1">
    <location>
        <position position="138"/>
    </location>
    <ligand>
        <name>Zn(2+)</name>
        <dbReference type="ChEBI" id="CHEBI:29105"/>
        <label>2</label>
    </ligand>
</feature>
<feature type="binding site" evidence="1">
    <location>
        <position position="166"/>
    </location>
    <ligand>
        <name>Zn(2+)</name>
        <dbReference type="ChEBI" id="CHEBI:29105"/>
        <label>1</label>
    </ligand>
</feature>
<feature type="binding site" evidence="1">
    <location>
        <position position="352"/>
    </location>
    <ligand>
        <name>Zn(2+)</name>
        <dbReference type="ChEBI" id="CHEBI:29105"/>
        <label>2</label>
    </ligand>
</feature>
<keyword id="KW-0028">Amino-acid biosynthesis</keyword>
<keyword id="KW-0170">Cobalt</keyword>
<keyword id="KW-0220">Diaminopimelate biosynthesis</keyword>
<keyword id="KW-0378">Hydrolase</keyword>
<keyword id="KW-0457">Lysine biosynthesis</keyword>
<keyword id="KW-0479">Metal-binding</keyword>
<keyword id="KW-1185">Reference proteome</keyword>
<keyword id="KW-0862">Zinc</keyword>
<sequence>MSATLALTEQLIARASVTPDDQHCQQLMIERLAALGFECETIASHGVTNFWAVKRGTAGRAGKLLAFAGHTDVVPTGPLEQWSSPPFVPTHRDGKLYGRGAADMKTSLAGFVVAAEEFVAAHPQHRGSIGFLITSDEEGPATDGTVKVVEALAARGERLDYCIVGEPTSTATLGDVVKNGRRGSMSGELVVKGVQGHIAYPHLAKNPIHLLAPALAELAAEQWDEGNEYFPPTTWQVSNLRAGTGATNVIPGHADLLFNFRFSTASTVEGLQARVHAILDRHGLDYTLNWSVSGLPFLTPRGELSNALDAAIRAETGVSPELSTTGGTSDGRFIARICPQVIEFGPPNASIHKIDEHIDVRFVDPLKNVYRRVLEQLIA</sequence>
<protein>
    <recommendedName>
        <fullName evidence="1">Succinyl-diaminopimelate desuccinylase</fullName>
        <shortName evidence="1">SDAP desuccinylase</shortName>
        <ecNumber evidence="1">3.5.1.18</ecNumber>
    </recommendedName>
    <alternativeName>
        <fullName evidence="1">N-succinyl-LL-2,6-diaminoheptanedioate amidohydrolase</fullName>
    </alternativeName>
</protein>
<evidence type="ECO:0000255" key="1">
    <source>
        <dbReference type="HAMAP-Rule" id="MF_01690"/>
    </source>
</evidence>
<evidence type="ECO:0000305" key="2"/>
<name>DAPE_BURPS</name>
<organism>
    <name type="scientific">Burkholderia pseudomallei (strain K96243)</name>
    <dbReference type="NCBI Taxonomy" id="272560"/>
    <lineage>
        <taxon>Bacteria</taxon>
        <taxon>Pseudomonadati</taxon>
        <taxon>Pseudomonadota</taxon>
        <taxon>Betaproteobacteria</taxon>
        <taxon>Burkholderiales</taxon>
        <taxon>Burkholderiaceae</taxon>
        <taxon>Burkholderia</taxon>
        <taxon>pseudomallei group</taxon>
    </lineage>
</organism>
<proteinExistence type="inferred from homology"/>
<dbReference type="EC" id="3.5.1.18" evidence="1"/>
<dbReference type="EMBL" id="BX571965">
    <property type="protein sequence ID" value="CAH36173.1"/>
    <property type="status" value="ALT_INIT"/>
    <property type="molecule type" value="Genomic_DNA"/>
</dbReference>
<dbReference type="RefSeq" id="WP_004521179.1">
    <property type="nucleotide sequence ID" value="NZ_CP009538.1"/>
</dbReference>
<dbReference type="RefSeq" id="YP_108766.1">
    <property type="nucleotide sequence ID" value="NC_006350.1"/>
</dbReference>
<dbReference type="SMR" id="Q63T00"/>
<dbReference type="STRING" id="272560.BPSL2171"/>
<dbReference type="GeneID" id="93060712"/>
<dbReference type="KEGG" id="bps:BPSL2171"/>
<dbReference type="PATRIC" id="fig|272560.51.peg.3279"/>
<dbReference type="eggNOG" id="COG0624">
    <property type="taxonomic scope" value="Bacteria"/>
</dbReference>
<dbReference type="UniPathway" id="UPA00034">
    <property type="reaction ID" value="UER00021"/>
</dbReference>
<dbReference type="Proteomes" id="UP000000605">
    <property type="component" value="Chromosome 1"/>
</dbReference>
<dbReference type="GO" id="GO:0008777">
    <property type="term" value="F:acetylornithine deacetylase activity"/>
    <property type="evidence" value="ECO:0007669"/>
    <property type="project" value="TreeGrafter"/>
</dbReference>
<dbReference type="GO" id="GO:0050897">
    <property type="term" value="F:cobalt ion binding"/>
    <property type="evidence" value="ECO:0007669"/>
    <property type="project" value="UniProtKB-UniRule"/>
</dbReference>
<dbReference type="GO" id="GO:0009014">
    <property type="term" value="F:succinyl-diaminopimelate desuccinylase activity"/>
    <property type="evidence" value="ECO:0007669"/>
    <property type="project" value="UniProtKB-UniRule"/>
</dbReference>
<dbReference type="GO" id="GO:0008270">
    <property type="term" value="F:zinc ion binding"/>
    <property type="evidence" value="ECO:0007669"/>
    <property type="project" value="UniProtKB-UniRule"/>
</dbReference>
<dbReference type="GO" id="GO:0019877">
    <property type="term" value="P:diaminopimelate biosynthetic process"/>
    <property type="evidence" value="ECO:0007669"/>
    <property type="project" value="UniProtKB-UniRule"/>
</dbReference>
<dbReference type="GO" id="GO:0006526">
    <property type="term" value="P:L-arginine biosynthetic process"/>
    <property type="evidence" value="ECO:0007669"/>
    <property type="project" value="TreeGrafter"/>
</dbReference>
<dbReference type="GO" id="GO:0009089">
    <property type="term" value="P:lysine biosynthetic process via diaminopimelate"/>
    <property type="evidence" value="ECO:0007669"/>
    <property type="project" value="UniProtKB-UniRule"/>
</dbReference>
<dbReference type="CDD" id="cd03891">
    <property type="entry name" value="M20_DapE_proteobac"/>
    <property type="match status" value="1"/>
</dbReference>
<dbReference type="FunFam" id="3.30.70.360:FF:000011">
    <property type="entry name" value="Succinyl-diaminopimelate desuccinylase"/>
    <property type="match status" value="1"/>
</dbReference>
<dbReference type="FunFam" id="3.40.630.10:FF:000005">
    <property type="entry name" value="Succinyl-diaminopimelate desuccinylase"/>
    <property type="match status" value="1"/>
</dbReference>
<dbReference type="Gene3D" id="3.40.630.10">
    <property type="entry name" value="Zn peptidases"/>
    <property type="match status" value="2"/>
</dbReference>
<dbReference type="HAMAP" id="MF_01690">
    <property type="entry name" value="DapE"/>
    <property type="match status" value="1"/>
</dbReference>
<dbReference type="InterPro" id="IPR001261">
    <property type="entry name" value="ArgE/DapE_CS"/>
</dbReference>
<dbReference type="InterPro" id="IPR036264">
    <property type="entry name" value="Bact_exopeptidase_dim_dom"/>
</dbReference>
<dbReference type="InterPro" id="IPR005941">
    <property type="entry name" value="DapE_proteobac"/>
</dbReference>
<dbReference type="InterPro" id="IPR002933">
    <property type="entry name" value="Peptidase_M20"/>
</dbReference>
<dbReference type="InterPro" id="IPR011650">
    <property type="entry name" value="Peptidase_M20_dimer"/>
</dbReference>
<dbReference type="InterPro" id="IPR050072">
    <property type="entry name" value="Peptidase_M20A"/>
</dbReference>
<dbReference type="NCBIfam" id="TIGR01246">
    <property type="entry name" value="dapE_proteo"/>
    <property type="match status" value="1"/>
</dbReference>
<dbReference type="NCBIfam" id="NF009557">
    <property type="entry name" value="PRK13009.1"/>
    <property type="match status" value="1"/>
</dbReference>
<dbReference type="PANTHER" id="PTHR43808">
    <property type="entry name" value="ACETYLORNITHINE DEACETYLASE"/>
    <property type="match status" value="1"/>
</dbReference>
<dbReference type="PANTHER" id="PTHR43808:SF31">
    <property type="entry name" value="N-ACETYL-L-CITRULLINE DEACETYLASE"/>
    <property type="match status" value="1"/>
</dbReference>
<dbReference type="Pfam" id="PF07687">
    <property type="entry name" value="M20_dimer"/>
    <property type="match status" value="1"/>
</dbReference>
<dbReference type="Pfam" id="PF01546">
    <property type="entry name" value="Peptidase_M20"/>
    <property type="match status" value="1"/>
</dbReference>
<dbReference type="SUPFAM" id="SSF55031">
    <property type="entry name" value="Bacterial exopeptidase dimerisation domain"/>
    <property type="match status" value="1"/>
</dbReference>
<dbReference type="SUPFAM" id="SSF53187">
    <property type="entry name" value="Zn-dependent exopeptidases"/>
    <property type="match status" value="1"/>
</dbReference>
<dbReference type="PROSITE" id="PS00758">
    <property type="entry name" value="ARGE_DAPE_CPG2_1"/>
    <property type="match status" value="1"/>
</dbReference>
<gene>
    <name evidence="1" type="primary">dapE</name>
    <name type="ordered locus">BPSL2171</name>
</gene>
<reference key="1">
    <citation type="journal article" date="2004" name="Proc. Natl. Acad. Sci. U.S.A.">
        <title>Genomic plasticity of the causative agent of melioidosis, Burkholderia pseudomallei.</title>
        <authorList>
            <person name="Holden M.T.G."/>
            <person name="Titball R.W."/>
            <person name="Peacock S.J."/>
            <person name="Cerdeno-Tarraga A.-M."/>
            <person name="Atkins T."/>
            <person name="Crossman L.C."/>
            <person name="Pitt T."/>
            <person name="Churcher C."/>
            <person name="Mungall K.L."/>
            <person name="Bentley S.D."/>
            <person name="Sebaihia M."/>
            <person name="Thomson N.R."/>
            <person name="Bason N."/>
            <person name="Beacham I.R."/>
            <person name="Brooks K."/>
            <person name="Brown K.A."/>
            <person name="Brown N.F."/>
            <person name="Challis G.L."/>
            <person name="Cherevach I."/>
            <person name="Chillingworth T."/>
            <person name="Cronin A."/>
            <person name="Crossett B."/>
            <person name="Davis P."/>
            <person name="DeShazer D."/>
            <person name="Feltwell T."/>
            <person name="Fraser A."/>
            <person name="Hance Z."/>
            <person name="Hauser H."/>
            <person name="Holroyd S."/>
            <person name="Jagels K."/>
            <person name="Keith K.E."/>
            <person name="Maddison M."/>
            <person name="Moule S."/>
            <person name="Price C."/>
            <person name="Quail M.A."/>
            <person name="Rabbinowitsch E."/>
            <person name="Rutherford K."/>
            <person name="Sanders M."/>
            <person name="Simmonds M."/>
            <person name="Songsivilai S."/>
            <person name="Stevens K."/>
            <person name="Tumapa S."/>
            <person name="Vesaratchavest M."/>
            <person name="Whitehead S."/>
            <person name="Yeats C."/>
            <person name="Barrell B.G."/>
            <person name="Oyston P.C.F."/>
            <person name="Parkhill J."/>
        </authorList>
    </citation>
    <scope>NUCLEOTIDE SEQUENCE [LARGE SCALE GENOMIC DNA]</scope>
    <source>
        <strain>K96243</strain>
    </source>
</reference>
<accession>Q63T00</accession>
<comment type="function">
    <text evidence="1">Catalyzes the hydrolysis of N-succinyl-L,L-diaminopimelic acid (SDAP), forming succinate and LL-2,6-diaminopimelate (DAP), an intermediate involved in the bacterial biosynthesis of lysine and meso-diaminopimelic acid, an essential component of bacterial cell walls.</text>
</comment>
<comment type="catalytic activity">
    <reaction evidence="1">
        <text>N-succinyl-(2S,6S)-2,6-diaminopimelate + H2O = (2S,6S)-2,6-diaminopimelate + succinate</text>
        <dbReference type="Rhea" id="RHEA:22608"/>
        <dbReference type="ChEBI" id="CHEBI:15377"/>
        <dbReference type="ChEBI" id="CHEBI:30031"/>
        <dbReference type="ChEBI" id="CHEBI:57609"/>
        <dbReference type="ChEBI" id="CHEBI:58087"/>
        <dbReference type="EC" id="3.5.1.18"/>
    </reaction>
</comment>
<comment type="cofactor">
    <cofactor evidence="1">
        <name>Zn(2+)</name>
        <dbReference type="ChEBI" id="CHEBI:29105"/>
    </cofactor>
    <cofactor evidence="1">
        <name>Co(2+)</name>
        <dbReference type="ChEBI" id="CHEBI:48828"/>
    </cofactor>
    <text evidence="1">Binds 2 Zn(2+) or Co(2+) ions per subunit.</text>
</comment>
<comment type="pathway">
    <text evidence="1">Amino-acid biosynthesis; L-lysine biosynthesis via DAP pathway; LL-2,6-diaminopimelate from (S)-tetrahydrodipicolinate (succinylase route): step 3/3.</text>
</comment>
<comment type="subunit">
    <text evidence="1">Homodimer.</text>
</comment>
<comment type="similarity">
    <text evidence="1">Belongs to the peptidase M20A family. DapE subfamily.</text>
</comment>
<comment type="sequence caution" evidence="2">
    <conflict type="erroneous initiation">
        <sequence resource="EMBL-CDS" id="CAH36173"/>
    </conflict>
</comment>